<dbReference type="EMBL" id="L24395">
    <property type="protein sequence ID" value="AAA73955.1"/>
    <property type="molecule type" value="mRNA"/>
</dbReference>
<dbReference type="EMBL" id="AACD01000100">
    <property type="protein sequence ID" value="EAA58402.1"/>
    <property type="molecule type" value="Genomic_DNA"/>
</dbReference>
<dbReference type="EMBL" id="BN001301">
    <property type="protein sequence ID" value="CBF70620.1"/>
    <property type="molecule type" value="Genomic_DNA"/>
</dbReference>
<dbReference type="PIR" id="S60771">
    <property type="entry name" value="S60771"/>
</dbReference>
<dbReference type="RefSeq" id="XP_663497.1">
    <property type="nucleotide sequence ID" value="XM_658405.2"/>
</dbReference>
<dbReference type="FunCoup" id="P38093">
    <property type="interactions" value="114"/>
</dbReference>
<dbReference type="STRING" id="227321.P38093"/>
<dbReference type="EnsemblFungi" id="CBF70620">
    <property type="protein sequence ID" value="CBF70620"/>
    <property type="gene ID" value="ANIA_05893"/>
</dbReference>
<dbReference type="GeneID" id="2870704"/>
<dbReference type="KEGG" id="ani:ANIA_05893"/>
<dbReference type="VEuPathDB" id="FungiDB:AN5893"/>
<dbReference type="eggNOG" id="KOG3589">
    <property type="taxonomic scope" value="Eukaryota"/>
</dbReference>
<dbReference type="HOGENOM" id="CLU_013365_0_1_1"/>
<dbReference type="InParanoid" id="P38093"/>
<dbReference type="OMA" id="DPGMRYL"/>
<dbReference type="OrthoDB" id="196547at2759"/>
<dbReference type="Proteomes" id="UP000000560">
    <property type="component" value="Chromosome I"/>
</dbReference>
<dbReference type="GO" id="GO:0030436">
    <property type="term" value="P:asexual sporulation"/>
    <property type="evidence" value="ECO:0000315"/>
    <property type="project" value="AspGD"/>
</dbReference>
<dbReference type="GO" id="GO:0048315">
    <property type="term" value="P:conidium formation"/>
    <property type="evidence" value="ECO:0000315"/>
    <property type="project" value="AspGD"/>
</dbReference>
<dbReference type="GO" id="GO:0035556">
    <property type="term" value="P:intracellular signal transduction"/>
    <property type="evidence" value="ECO:0000315"/>
    <property type="project" value="AspGD"/>
</dbReference>
<dbReference type="GO" id="GO:0009968">
    <property type="term" value="P:negative regulation of signal transduction"/>
    <property type="evidence" value="ECO:0007669"/>
    <property type="project" value="UniProtKB-KW"/>
</dbReference>
<dbReference type="GO" id="GO:0010914">
    <property type="term" value="P:positive regulation of sterigmatocystin biosynthetic process"/>
    <property type="evidence" value="ECO:0000315"/>
    <property type="project" value="AspGD"/>
</dbReference>
<dbReference type="GO" id="GO:0075306">
    <property type="term" value="P:regulation of conidium formation"/>
    <property type="evidence" value="ECO:0000315"/>
    <property type="project" value="AspGD"/>
</dbReference>
<dbReference type="GO" id="GO:1900376">
    <property type="term" value="P:regulation of secondary metabolite biosynthetic process"/>
    <property type="evidence" value="ECO:0000315"/>
    <property type="project" value="AspGD"/>
</dbReference>
<dbReference type="GO" id="GO:0006357">
    <property type="term" value="P:regulation of transcription by RNA polymerase II"/>
    <property type="evidence" value="ECO:0000315"/>
    <property type="project" value="AspGD"/>
</dbReference>
<dbReference type="GO" id="GO:0045461">
    <property type="term" value="P:sterigmatocystin biosynthetic process"/>
    <property type="evidence" value="ECO:0000315"/>
    <property type="project" value="AspGD"/>
</dbReference>
<dbReference type="GO" id="GO:0045574">
    <property type="term" value="P:sterigmatocystin catabolic process"/>
    <property type="evidence" value="ECO:0000315"/>
    <property type="project" value="AspGD"/>
</dbReference>
<dbReference type="CDD" id="cd04450">
    <property type="entry name" value="DEP_RGS7-like"/>
    <property type="match status" value="1"/>
</dbReference>
<dbReference type="CDD" id="cd08708">
    <property type="entry name" value="RGS_FLBA"/>
    <property type="match status" value="1"/>
</dbReference>
<dbReference type="FunFam" id="1.10.10.10:FF:000315">
    <property type="entry name" value="Developmental regulator FlbA"/>
    <property type="match status" value="1"/>
</dbReference>
<dbReference type="Gene3D" id="1.10.167.10">
    <property type="entry name" value="Regulator of G-protein Signalling 4, domain 2"/>
    <property type="match status" value="1"/>
</dbReference>
<dbReference type="Gene3D" id="1.10.10.10">
    <property type="entry name" value="Winged helix-like DNA-binding domain superfamily/Winged helix DNA-binding domain"/>
    <property type="match status" value="2"/>
</dbReference>
<dbReference type="InterPro" id="IPR000591">
    <property type="entry name" value="DEP_dom"/>
</dbReference>
<dbReference type="InterPro" id="IPR016137">
    <property type="entry name" value="RGS"/>
</dbReference>
<dbReference type="InterPro" id="IPR036305">
    <property type="entry name" value="RGS_sf"/>
</dbReference>
<dbReference type="InterPro" id="IPR044926">
    <property type="entry name" value="RGS_subdomain_2"/>
</dbReference>
<dbReference type="InterPro" id="IPR036388">
    <property type="entry name" value="WH-like_DNA-bd_sf"/>
</dbReference>
<dbReference type="InterPro" id="IPR036390">
    <property type="entry name" value="WH_DNA-bd_sf"/>
</dbReference>
<dbReference type="PANTHER" id="PTHR10845:SF192">
    <property type="entry name" value="DOUBLE HIT, ISOFORM B"/>
    <property type="match status" value="1"/>
</dbReference>
<dbReference type="PANTHER" id="PTHR10845">
    <property type="entry name" value="REGULATOR OF G PROTEIN SIGNALING"/>
    <property type="match status" value="1"/>
</dbReference>
<dbReference type="Pfam" id="PF00610">
    <property type="entry name" value="DEP"/>
    <property type="match status" value="1"/>
</dbReference>
<dbReference type="Pfam" id="PF00615">
    <property type="entry name" value="RGS"/>
    <property type="match status" value="1"/>
</dbReference>
<dbReference type="PRINTS" id="PR01301">
    <property type="entry name" value="RGSPROTEIN"/>
</dbReference>
<dbReference type="SMART" id="SM00049">
    <property type="entry name" value="DEP"/>
    <property type="match status" value="2"/>
</dbReference>
<dbReference type="SMART" id="SM00315">
    <property type="entry name" value="RGS"/>
    <property type="match status" value="1"/>
</dbReference>
<dbReference type="SUPFAM" id="SSF48097">
    <property type="entry name" value="Regulator of G-protein signaling, RGS"/>
    <property type="match status" value="1"/>
</dbReference>
<dbReference type="SUPFAM" id="SSF46785">
    <property type="entry name" value="Winged helix' DNA-binding domain"/>
    <property type="match status" value="2"/>
</dbReference>
<dbReference type="PROSITE" id="PS50186">
    <property type="entry name" value="DEP"/>
    <property type="match status" value="1"/>
</dbReference>
<dbReference type="PROSITE" id="PS50132">
    <property type="entry name" value="RGS"/>
    <property type="match status" value="1"/>
</dbReference>
<feature type="chain" id="PRO_0000204172" description="Developmental regulator flbA">
    <location>
        <begin position="1"/>
        <end position="719"/>
    </location>
</feature>
<feature type="domain" description="DEP" evidence="2">
    <location>
        <begin position="425"/>
        <end position="511"/>
    </location>
</feature>
<feature type="domain" description="RGS" evidence="3">
    <location>
        <begin position="540"/>
        <end position="685"/>
    </location>
</feature>
<feature type="region of interest" description="Disordered" evidence="4">
    <location>
        <begin position="1"/>
        <end position="39"/>
    </location>
</feature>
<feature type="region of interest" description="Disordered" evidence="4">
    <location>
        <begin position="117"/>
        <end position="141"/>
    </location>
</feature>
<feature type="region of interest" description="Disordered" evidence="4">
    <location>
        <begin position="155"/>
        <end position="190"/>
    </location>
</feature>
<feature type="region of interest" description="Fungal-DR">
    <location>
        <begin position="214"/>
        <end position="411"/>
    </location>
</feature>
<feature type="region of interest" description="Disordered" evidence="4">
    <location>
        <begin position="694"/>
        <end position="719"/>
    </location>
</feature>
<feature type="compositionally biased region" description="Polar residues" evidence="4">
    <location>
        <begin position="1"/>
        <end position="17"/>
    </location>
</feature>
<feature type="compositionally biased region" description="Low complexity" evidence="4">
    <location>
        <begin position="123"/>
        <end position="135"/>
    </location>
</feature>
<feature type="compositionally biased region" description="Low complexity" evidence="4">
    <location>
        <begin position="158"/>
        <end position="171"/>
    </location>
</feature>
<proteinExistence type="evidence at transcript level"/>
<organism>
    <name type="scientific">Emericella nidulans (strain FGSC A4 / ATCC 38163 / CBS 112.46 / NRRL 194 / M139)</name>
    <name type="common">Aspergillus nidulans</name>
    <dbReference type="NCBI Taxonomy" id="227321"/>
    <lineage>
        <taxon>Eukaryota</taxon>
        <taxon>Fungi</taxon>
        <taxon>Dikarya</taxon>
        <taxon>Ascomycota</taxon>
        <taxon>Pezizomycotina</taxon>
        <taxon>Eurotiomycetes</taxon>
        <taxon>Eurotiomycetidae</taxon>
        <taxon>Eurotiales</taxon>
        <taxon>Aspergillaceae</taxon>
        <taxon>Aspergillus</taxon>
        <taxon>Aspergillus subgen. Nidulantes</taxon>
    </lineage>
</organism>
<keyword id="KW-1185">Reference proteome</keyword>
<keyword id="KW-0734">Signal transduction inhibitor</keyword>
<reference key="1">
    <citation type="journal article" date="1994" name="Mol. Microbiol.">
        <title>Overexpression of flbA, an early regulator of Aspergillus asexual sporulation, leads to activation of brlA and premature initiation of development.</title>
        <authorList>
            <person name="Lee B.N."/>
            <person name="Adams T.H."/>
        </authorList>
    </citation>
    <scope>NUCLEOTIDE SEQUENCE [MRNA]</scope>
</reference>
<reference key="2">
    <citation type="journal article" date="2005" name="Nature">
        <title>Sequencing of Aspergillus nidulans and comparative analysis with A. fumigatus and A. oryzae.</title>
        <authorList>
            <person name="Galagan J.E."/>
            <person name="Calvo S.E."/>
            <person name="Cuomo C."/>
            <person name="Ma L.-J."/>
            <person name="Wortman J.R."/>
            <person name="Batzoglou S."/>
            <person name="Lee S.-I."/>
            <person name="Bastuerkmen M."/>
            <person name="Spevak C.C."/>
            <person name="Clutterbuck J."/>
            <person name="Kapitonov V."/>
            <person name="Jurka J."/>
            <person name="Scazzocchio C."/>
            <person name="Farman M.L."/>
            <person name="Butler J."/>
            <person name="Purcell S."/>
            <person name="Harris S."/>
            <person name="Braus G.H."/>
            <person name="Draht O."/>
            <person name="Busch S."/>
            <person name="D'Enfert C."/>
            <person name="Bouchier C."/>
            <person name="Goldman G.H."/>
            <person name="Bell-Pedersen D."/>
            <person name="Griffiths-Jones S."/>
            <person name="Doonan J.H."/>
            <person name="Yu J."/>
            <person name="Vienken K."/>
            <person name="Pain A."/>
            <person name="Freitag M."/>
            <person name="Selker E.U."/>
            <person name="Archer D.B."/>
            <person name="Penalva M.A."/>
            <person name="Oakley B.R."/>
            <person name="Momany M."/>
            <person name="Tanaka T."/>
            <person name="Kumagai T."/>
            <person name="Asai K."/>
            <person name="Machida M."/>
            <person name="Nierman W.C."/>
            <person name="Denning D.W."/>
            <person name="Caddick M.X."/>
            <person name="Hynes M."/>
            <person name="Paoletti M."/>
            <person name="Fischer R."/>
            <person name="Miller B.L."/>
            <person name="Dyer P.S."/>
            <person name="Sachs M.S."/>
            <person name="Osmani S.A."/>
            <person name="Birren B.W."/>
        </authorList>
    </citation>
    <scope>NUCLEOTIDE SEQUENCE [LARGE SCALE GENOMIC DNA]</scope>
    <source>
        <strain>FGSC A4 / ATCC 38163 / CBS 112.46 / NRRL 194 / M139</strain>
    </source>
</reference>
<reference key="3">
    <citation type="journal article" date="2009" name="Fungal Genet. Biol.">
        <title>The 2008 update of the Aspergillus nidulans genome annotation: a community effort.</title>
        <authorList>
            <person name="Wortman J.R."/>
            <person name="Gilsenan J.M."/>
            <person name="Joardar V."/>
            <person name="Deegan J."/>
            <person name="Clutterbuck J."/>
            <person name="Andersen M.R."/>
            <person name="Archer D."/>
            <person name="Bencina M."/>
            <person name="Braus G."/>
            <person name="Coutinho P."/>
            <person name="von Dohren H."/>
            <person name="Doonan J."/>
            <person name="Driessen A.J."/>
            <person name="Durek P."/>
            <person name="Espeso E."/>
            <person name="Fekete E."/>
            <person name="Flipphi M."/>
            <person name="Estrada C.G."/>
            <person name="Geysens S."/>
            <person name="Goldman G."/>
            <person name="de Groot P.W."/>
            <person name="Hansen K."/>
            <person name="Harris S.D."/>
            <person name="Heinekamp T."/>
            <person name="Helmstaedt K."/>
            <person name="Henrissat B."/>
            <person name="Hofmann G."/>
            <person name="Homan T."/>
            <person name="Horio T."/>
            <person name="Horiuchi H."/>
            <person name="James S."/>
            <person name="Jones M."/>
            <person name="Karaffa L."/>
            <person name="Karanyi Z."/>
            <person name="Kato M."/>
            <person name="Keller N."/>
            <person name="Kelly D.E."/>
            <person name="Kiel J.A."/>
            <person name="Kim J.M."/>
            <person name="van der Klei I.J."/>
            <person name="Klis F.M."/>
            <person name="Kovalchuk A."/>
            <person name="Krasevec N."/>
            <person name="Kubicek C.P."/>
            <person name="Liu B."/>
            <person name="Maccabe A."/>
            <person name="Meyer V."/>
            <person name="Mirabito P."/>
            <person name="Miskei M."/>
            <person name="Mos M."/>
            <person name="Mullins J."/>
            <person name="Nelson D.R."/>
            <person name="Nielsen J."/>
            <person name="Oakley B.R."/>
            <person name="Osmani S.A."/>
            <person name="Pakula T."/>
            <person name="Paszewski A."/>
            <person name="Paulsen I."/>
            <person name="Pilsyk S."/>
            <person name="Pocsi I."/>
            <person name="Punt P.J."/>
            <person name="Ram A.F."/>
            <person name="Ren Q."/>
            <person name="Robellet X."/>
            <person name="Robson G."/>
            <person name="Seiboth B."/>
            <person name="van Solingen P."/>
            <person name="Specht T."/>
            <person name="Sun J."/>
            <person name="Taheri-Talesh N."/>
            <person name="Takeshita N."/>
            <person name="Ussery D."/>
            <person name="vanKuyk P.A."/>
            <person name="Visser H."/>
            <person name="van de Vondervoort P.J."/>
            <person name="de Vries R.P."/>
            <person name="Walton J."/>
            <person name="Xiang X."/>
            <person name="Xiong Y."/>
            <person name="Zeng A.P."/>
            <person name="Brandt B.W."/>
            <person name="Cornell M.J."/>
            <person name="van den Hondel C.A."/>
            <person name="Visser J."/>
            <person name="Oliver S.G."/>
            <person name="Turner G."/>
        </authorList>
    </citation>
    <scope>GENOME REANNOTATION</scope>
    <source>
        <strain>FGSC A4 / ATCC 38163 / CBS 112.46 / NRRL 194 / M139</strain>
    </source>
</reference>
<protein>
    <recommendedName>
        <fullName>Developmental regulator flbA</fullName>
    </recommendedName>
</protein>
<accession>P38093</accession>
<accession>C8UZV8</accession>
<accession>Q5B0N7</accession>
<gene>
    <name type="primary">flbA</name>
    <name type="ORF">AN5893</name>
</gene>
<evidence type="ECO:0000250" key="1"/>
<evidence type="ECO:0000255" key="2">
    <source>
        <dbReference type="PROSITE-ProRule" id="PRU00066"/>
    </source>
</evidence>
<evidence type="ECO:0000255" key="3">
    <source>
        <dbReference type="PROSITE-ProRule" id="PRU00171"/>
    </source>
</evidence>
<evidence type="ECO:0000256" key="4">
    <source>
        <dbReference type="SAM" id="MobiDB-lite"/>
    </source>
</evidence>
<sequence length="719" mass="78799">MPTSISTAPLSQGSPPSSLIDYQPQSVPSSSSPPPSTAAAAAAAVVVAVPSSSSPVDLGLPSFTSTSSLITSDVPATTTTPSFTGSVIGSISRRNRRSFAALAREKTSSALANLSSIGSTTNSSLRQSASSGSLQKHSRKASQLSVGEISGFVPLSPPLSDGSGSSEQSSSAPFEPLSAVTEQPNPAAERRRQTIQLVPPISENIPVSPAKMHQTSSRLLRMTEDDRPFTKDFMDLFSTLMVSLKLDSHRVRFTKYDHTFTSEEAINNLGSLKFSQSNRMPDPKDPSRIVTTTTTTTFSMAKEMARSVCQRFVDARFIESVDGKYSHTFPLKGALYQLTPKGINILQRFCQRNGITARHVIDVLESPRNTMQLVNLERDTETDKLSHDRATIEVIFRRFAGQDGPNVKSSVSSSDSDSLSDYSNGLVGVKMARERKVGDKICANTFTGKAAVDWLMDCSTTIEPRETVLIAELFVKYGLITVLQEDRSMPQVENSLVAFQPSKNAIYAITERGQRVCGWLARDKPRDTTTYDSRGIPRDSNNARLNHILQDPALRLLFREFLRFSLCEENLSFYIDVSEFTTQYHKFDKVGHFKKPDAVRETLAAAYGLYNAFLAPGSPCELNIDHALRNSLASRMTKAVGDDDSMLKSLQEVVQLFEMAQTSVFKLMSSDSVPKFLRDPKYSAILQEHDVDDLIGGGRSYSPTPGNVPERSMSRSQRS</sequence>
<name>FLBA_EMENI</name>
<comment type="function">
    <text>Required for asexual sporulation and normal colony development. May be involved in brlA activation. Could play a regulatory role in controlling the flug-initiated signal transduction pathway that triggers the asexual reproduction.</text>
</comment>
<comment type="developmental stage">
    <text>Present throughout the asexual cycle.</text>
</comment>
<comment type="domain">
    <text evidence="1">The fungal-differentiation regulator (Fungal-DR) domain is only found in fungal regulator of G-protein signaling (RGS) proteins that regulate differentiation pathways. It is required for function (By similarity).</text>
</comment>